<sequence>MDNYKKILVALALDPNSDRPLVEKAKELSANRDAQLYLIHAVEHLSSYGAAYGVAAGVDVEDMLLEEAKKRMNEIASQLNISSDHQIVKVGPAKFLILEQAKNWGVDLIIVGSHGRHGIQLLLGSTSNAVLHGAKCDVLAVRIKGS</sequence>
<comment type="function">
    <text evidence="1">Involved in stress response.</text>
</comment>
<comment type="subunit">
    <text evidence="1">Homodimer.</text>
</comment>
<comment type="subcellular location">
    <subcellularLocation>
        <location evidence="1">Cytoplasm</location>
    </subcellularLocation>
</comment>
<comment type="developmental stage">
    <text evidence="2">More than twofold more abundant in the large cell variant (LCV) stage than in the small cell variant (SCV) stage (at protein level). LCVs are more metabolically active than SCVs.</text>
</comment>
<comment type="similarity">
    <text evidence="3">Belongs to the universal stress protein A family.</text>
</comment>
<proteinExistence type="evidence at protein level"/>
<name>USPA2_COXBU</name>
<dbReference type="EMBL" id="U10529">
    <property type="protein sequence ID" value="AAA56915.1"/>
    <property type="molecule type" value="Genomic_DNA"/>
</dbReference>
<dbReference type="EMBL" id="AE016828">
    <property type="protein sequence ID" value="AAO91407.1"/>
    <property type="molecule type" value="Genomic_DNA"/>
</dbReference>
<dbReference type="PIR" id="I40650">
    <property type="entry name" value="I40650"/>
</dbReference>
<dbReference type="RefSeq" id="NP_820893.1">
    <property type="nucleotide sequence ID" value="NC_002971.3"/>
</dbReference>
<dbReference type="RefSeq" id="WP_010958534.1">
    <property type="nucleotide sequence ID" value="NC_002971.4"/>
</dbReference>
<dbReference type="SMR" id="P45680"/>
<dbReference type="STRING" id="227377.CBU_1916"/>
<dbReference type="EnsemblBacteria" id="AAO91407">
    <property type="protein sequence ID" value="AAO91407"/>
    <property type="gene ID" value="CBU_1916"/>
</dbReference>
<dbReference type="GeneID" id="1209829"/>
<dbReference type="KEGG" id="cbu:CBU_1916"/>
<dbReference type="PATRIC" id="fig|227377.7.peg.1900"/>
<dbReference type="eggNOG" id="COG0589">
    <property type="taxonomic scope" value="Bacteria"/>
</dbReference>
<dbReference type="HOGENOM" id="CLU_049301_11_3_6"/>
<dbReference type="OrthoDB" id="9792500at2"/>
<dbReference type="Proteomes" id="UP000002671">
    <property type="component" value="Chromosome"/>
</dbReference>
<dbReference type="GO" id="GO:0005737">
    <property type="term" value="C:cytoplasm"/>
    <property type="evidence" value="ECO:0007669"/>
    <property type="project" value="UniProtKB-SubCell"/>
</dbReference>
<dbReference type="GO" id="GO:0006950">
    <property type="term" value="P:response to stress"/>
    <property type="evidence" value="ECO:0000318"/>
    <property type="project" value="GO_Central"/>
</dbReference>
<dbReference type="CDD" id="cd23657">
    <property type="entry name" value="USP-A-like"/>
    <property type="match status" value="1"/>
</dbReference>
<dbReference type="Gene3D" id="3.40.50.620">
    <property type="entry name" value="HUPs"/>
    <property type="match status" value="1"/>
</dbReference>
<dbReference type="InterPro" id="IPR014729">
    <property type="entry name" value="Rossmann-like_a/b/a_fold"/>
</dbReference>
<dbReference type="InterPro" id="IPR006015">
    <property type="entry name" value="Universal_stress_UspA"/>
</dbReference>
<dbReference type="InterPro" id="IPR006016">
    <property type="entry name" value="UspA"/>
</dbReference>
<dbReference type="PANTHER" id="PTHR46268">
    <property type="entry name" value="STRESS RESPONSE PROTEIN NHAX"/>
    <property type="match status" value="1"/>
</dbReference>
<dbReference type="PANTHER" id="PTHR46268:SF23">
    <property type="entry name" value="UNIVERSAL STRESS PROTEIN A-RELATED"/>
    <property type="match status" value="1"/>
</dbReference>
<dbReference type="Pfam" id="PF00582">
    <property type="entry name" value="Usp"/>
    <property type="match status" value="1"/>
</dbReference>
<dbReference type="PIRSF" id="PIRSF006276">
    <property type="entry name" value="UspA"/>
    <property type="match status" value="1"/>
</dbReference>
<dbReference type="PRINTS" id="PR01438">
    <property type="entry name" value="UNVRSLSTRESS"/>
</dbReference>
<dbReference type="SUPFAM" id="SSF52402">
    <property type="entry name" value="Adenine nucleotide alpha hydrolases-like"/>
    <property type="match status" value="1"/>
</dbReference>
<reference key="1">
    <citation type="journal article" date="1994" name="J. Bacteriol.">
        <title>Cloning and characterization of an autonomous replication sequence from Coxiella burnetii.</title>
        <authorList>
            <person name="Suhan M."/>
            <person name="Chen S.Y."/>
            <person name="Thompson H.A."/>
            <person name="Hoover T.A."/>
            <person name="Hill A."/>
            <person name="Williams J.C."/>
        </authorList>
    </citation>
    <scope>NUCLEOTIDE SEQUENCE [GENOMIC DNA]</scope>
    <source>
        <strain>Nine Mile phase I / Bratislava</strain>
    </source>
</reference>
<reference key="2">
    <citation type="journal article" date="2003" name="Proc. Natl. Acad. Sci. U.S.A.">
        <title>Complete genome sequence of the Q-fever pathogen, Coxiella burnetii.</title>
        <authorList>
            <person name="Seshadri R."/>
            <person name="Paulsen I.T."/>
            <person name="Eisen J.A."/>
            <person name="Read T.D."/>
            <person name="Nelson K.E."/>
            <person name="Nelson W.C."/>
            <person name="Ward N.L."/>
            <person name="Tettelin H."/>
            <person name="Davidsen T.M."/>
            <person name="Beanan M.J."/>
            <person name="DeBoy R.T."/>
            <person name="Daugherty S.C."/>
            <person name="Brinkac L.M."/>
            <person name="Madupu R."/>
            <person name="Dodson R.J."/>
            <person name="Khouri H.M."/>
            <person name="Lee K.H."/>
            <person name="Carty H.A."/>
            <person name="Scanlan D."/>
            <person name="Heinzen R.A."/>
            <person name="Thompson H.A."/>
            <person name="Samuel J.E."/>
            <person name="Fraser C.M."/>
            <person name="Heidelberg J.F."/>
        </authorList>
    </citation>
    <scope>NUCLEOTIDE SEQUENCE [LARGE SCALE GENOMIC DNA]</scope>
    <source>
        <strain>RSA 493 / Nine Mile phase I</strain>
    </source>
</reference>
<reference key="3">
    <citation type="journal article" date="2007" name="Infect. Immun.">
        <title>Proteome and antigen profiling of Coxiella burnetii developmental forms.</title>
        <authorList>
            <person name="Coleman S.A."/>
            <person name="Fischer E.R."/>
            <person name="Cockrell D.C."/>
            <person name="Voth D.E."/>
            <person name="Howe D."/>
            <person name="Mead D.J."/>
            <person name="Samuel J.E."/>
            <person name="Heinzen R.A."/>
        </authorList>
    </citation>
    <scope>IDENTIFICATION BY MASS SPECTROMETRY</scope>
    <scope>DEVELOPMENTAL STAGE</scope>
    <source>
        <strain>Nine Mile Crazy / RSA 514</strain>
    </source>
</reference>
<evidence type="ECO:0000250" key="1"/>
<evidence type="ECO:0000269" key="2">
    <source>
    </source>
</evidence>
<evidence type="ECO:0000305" key="3"/>
<protein>
    <recommendedName>
        <fullName>Universal stress protein A homolog 2</fullName>
    </recommendedName>
</protein>
<accession>P45680</accession>
<keyword id="KW-0963">Cytoplasm</keyword>
<keyword id="KW-1185">Reference proteome</keyword>
<organism>
    <name type="scientific">Coxiella burnetii (strain RSA 493 / Nine Mile phase I)</name>
    <dbReference type="NCBI Taxonomy" id="227377"/>
    <lineage>
        <taxon>Bacteria</taxon>
        <taxon>Pseudomonadati</taxon>
        <taxon>Pseudomonadota</taxon>
        <taxon>Gammaproteobacteria</taxon>
        <taxon>Legionellales</taxon>
        <taxon>Coxiellaceae</taxon>
        <taxon>Coxiella</taxon>
    </lineage>
</organism>
<gene>
    <name type="primary">uspA2</name>
    <name type="synonym">uspA</name>
    <name type="ordered locus">CBU_1916</name>
</gene>
<feature type="chain" id="PRO_0000147443" description="Universal stress protein A homolog 2">
    <location>
        <begin position="1"/>
        <end position="146"/>
    </location>
</feature>